<organism>
    <name type="scientific">Shouchella clausii (strain KSM-K16)</name>
    <name type="common">Alkalihalobacillus clausii</name>
    <dbReference type="NCBI Taxonomy" id="66692"/>
    <lineage>
        <taxon>Bacteria</taxon>
        <taxon>Bacillati</taxon>
        <taxon>Bacillota</taxon>
        <taxon>Bacilli</taxon>
        <taxon>Bacillales</taxon>
        <taxon>Bacillaceae</taxon>
        <taxon>Shouchella</taxon>
    </lineage>
</organism>
<comment type="function">
    <text evidence="1">NAD-binding protein involved in the addition of a carboxymethylaminomethyl (cmnm) group at the wobble position (U34) of certain tRNAs, forming tRNA-cmnm(5)s(2)U34.</text>
</comment>
<comment type="cofactor">
    <cofactor evidence="1">
        <name>FAD</name>
        <dbReference type="ChEBI" id="CHEBI:57692"/>
    </cofactor>
</comment>
<comment type="subunit">
    <text evidence="1">Homodimer. Heterotetramer of two MnmE and two MnmG subunits.</text>
</comment>
<comment type="subcellular location">
    <subcellularLocation>
        <location evidence="1">Cytoplasm</location>
    </subcellularLocation>
</comment>
<comment type="similarity">
    <text evidence="1">Belongs to the MnmG family.</text>
</comment>
<evidence type="ECO:0000255" key="1">
    <source>
        <dbReference type="HAMAP-Rule" id="MF_00129"/>
    </source>
</evidence>
<name>MNMG_SHOC1</name>
<accession>Q5WAG4</accession>
<keyword id="KW-0963">Cytoplasm</keyword>
<keyword id="KW-0274">FAD</keyword>
<keyword id="KW-0285">Flavoprotein</keyword>
<keyword id="KW-0520">NAD</keyword>
<keyword id="KW-1185">Reference proteome</keyword>
<keyword id="KW-0819">tRNA processing</keyword>
<proteinExistence type="inferred from homology"/>
<reference key="1">
    <citation type="submission" date="2003-10" db="EMBL/GenBank/DDBJ databases">
        <title>The complete genome sequence of the alkaliphilic Bacillus clausii KSM-K16.</title>
        <authorList>
            <person name="Takaki Y."/>
            <person name="Kageyama Y."/>
            <person name="Shimamura S."/>
            <person name="Suzuki H."/>
            <person name="Nishi S."/>
            <person name="Hatada Y."/>
            <person name="Kawai S."/>
            <person name="Ito S."/>
            <person name="Horikoshi K."/>
        </authorList>
    </citation>
    <scope>NUCLEOTIDE SEQUENCE [LARGE SCALE GENOMIC DNA]</scope>
    <source>
        <strain>KSM-K16</strain>
    </source>
</reference>
<feature type="chain" id="PRO_0000117051" description="tRNA uridine 5-carboxymethylaminomethyl modification enzyme MnmG">
    <location>
        <begin position="1"/>
        <end position="629"/>
    </location>
</feature>
<feature type="binding site" evidence="1">
    <location>
        <begin position="14"/>
        <end position="19"/>
    </location>
    <ligand>
        <name>FAD</name>
        <dbReference type="ChEBI" id="CHEBI:57692"/>
    </ligand>
</feature>
<feature type="binding site" evidence="1">
    <location>
        <position position="126"/>
    </location>
    <ligand>
        <name>FAD</name>
        <dbReference type="ChEBI" id="CHEBI:57692"/>
    </ligand>
</feature>
<feature type="binding site" evidence="1">
    <location>
        <position position="181"/>
    </location>
    <ligand>
        <name>FAD</name>
        <dbReference type="ChEBI" id="CHEBI:57692"/>
    </ligand>
</feature>
<feature type="binding site" evidence="1">
    <location>
        <begin position="273"/>
        <end position="287"/>
    </location>
    <ligand>
        <name>NAD(+)</name>
        <dbReference type="ChEBI" id="CHEBI:57540"/>
    </ligand>
</feature>
<feature type="binding site" evidence="1">
    <location>
        <position position="370"/>
    </location>
    <ligand>
        <name>FAD</name>
        <dbReference type="ChEBI" id="CHEBI:57692"/>
    </ligand>
</feature>
<dbReference type="EMBL" id="AP006627">
    <property type="protein sequence ID" value="BAD66647.1"/>
    <property type="molecule type" value="Genomic_DNA"/>
</dbReference>
<dbReference type="RefSeq" id="WP_011248949.1">
    <property type="nucleotide sequence ID" value="NC_006582.1"/>
</dbReference>
<dbReference type="SMR" id="Q5WAG4"/>
<dbReference type="STRING" id="66692.ABC4116"/>
<dbReference type="KEGG" id="bcl:ABC4116"/>
<dbReference type="eggNOG" id="COG0445">
    <property type="taxonomic scope" value="Bacteria"/>
</dbReference>
<dbReference type="HOGENOM" id="CLU_007831_2_2_9"/>
<dbReference type="OrthoDB" id="9815560at2"/>
<dbReference type="Proteomes" id="UP000001168">
    <property type="component" value="Chromosome"/>
</dbReference>
<dbReference type="GO" id="GO:0005829">
    <property type="term" value="C:cytosol"/>
    <property type="evidence" value="ECO:0007669"/>
    <property type="project" value="TreeGrafter"/>
</dbReference>
<dbReference type="GO" id="GO:0050660">
    <property type="term" value="F:flavin adenine dinucleotide binding"/>
    <property type="evidence" value="ECO:0007669"/>
    <property type="project" value="UniProtKB-UniRule"/>
</dbReference>
<dbReference type="GO" id="GO:0030488">
    <property type="term" value="P:tRNA methylation"/>
    <property type="evidence" value="ECO:0007669"/>
    <property type="project" value="TreeGrafter"/>
</dbReference>
<dbReference type="GO" id="GO:0002098">
    <property type="term" value="P:tRNA wobble uridine modification"/>
    <property type="evidence" value="ECO:0007669"/>
    <property type="project" value="InterPro"/>
</dbReference>
<dbReference type="FunFam" id="1.10.10.1800:FF:000001">
    <property type="entry name" value="tRNA uridine 5-carboxymethylaminomethyl modification enzyme MnmG"/>
    <property type="match status" value="1"/>
</dbReference>
<dbReference type="FunFam" id="1.10.150.570:FF:000001">
    <property type="entry name" value="tRNA uridine 5-carboxymethylaminomethyl modification enzyme MnmG"/>
    <property type="match status" value="1"/>
</dbReference>
<dbReference type="FunFam" id="3.50.50.60:FF:000002">
    <property type="entry name" value="tRNA uridine 5-carboxymethylaminomethyl modification enzyme MnmG"/>
    <property type="match status" value="1"/>
</dbReference>
<dbReference type="FunFam" id="3.50.50.60:FF:000063">
    <property type="entry name" value="tRNA uridine 5-carboxymethylaminomethyl modification enzyme MnmG"/>
    <property type="match status" value="1"/>
</dbReference>
<dbReference type="Gene3D" id="3.50.50.60">
    <property type="entry name" value="FAD/NAD(P)-binding domain"/>
    <property type="match status" value="2"/>
</dbReference>
<dbReference type="Gene3D" id="1.10.150.570">
    <property type="entry name" value="GidA associated domain, C-terminal subdomain"/>
    <property type="match status" value="1"/>
</dbReference>
<dbReference type="Gene3D" id="1.10.10.1800">
    <property type="entry name" value="tRNA uridine 5-carboxymethylaminomethyl modification enzyme MnmG/GidA"/>
    <property type="match status" value="1"/>
</dbReference>
<dbReference type="HAMAP" id="MF_00129">
    <property type="entry name" value="MnmG_GidA"/>
    <property type="match status" value="1"/>
</dbReference>
<dbReference type="InterPro" id="IPR036188">
    <property type="entry name" value="FAD/NAD-bd_sf"/>
</dbReference>
<dbReference type="InterPro" id="IPR049312">
    <property type="entry name" value="GIDA_C_N"/>
</dbReference>
<dbReference type="InterPro" id="IPR004416">
    <property type="entry name" value="MnmG"/>
</dbReference>
<dbReference type="InterPro" id="IPR002218">
    <property type="entry name" value="MnmG-rel"/>
</dbReference>
<dbReference type="InterPro" id="IPR020595">
    <property type="entry name" value="MnmG-rel_CS"/>
</dbReference>
<dbReference type="InterPro" id="IPR026904">
    <property type="entry name" value="MnmG_C"/>
</dbReference>
<dbReference type="InterPro" id="IPR047001">
    <property type="entry name" value="MnmG_C_subdom"/>
</dbReference>
<dbReference type="InterPro" id="IPR044920">
    <property type="entry name" value="MnmG_C_subdom_sf"/>
</dbReference>
<dbReference type="InterPro" id="IPR040131">
    <property type="entry name" value="MnmG_N"/>
</dbReference>
<dbReference type="NCBIfam" id="TIGR00136">
    <property type="entry name" value="mnmG_gidA"/>
    <property type="match status" value="1"/>
</dbReference>
<dbReference type="PANTHER" id="PTHR11806">
    <property type="entry name" value="GLUCOSE INHIBITED DIVISION PROTEIN A"/>
    <property type="match status" value="1"/>
</dbReference>
<dbReference type="PANTHER" id="PTHR11806:SF0">
    <property type="entry name" value="PROTEIN MTO1 HOMOLOG, MITOCHONDRIAL"/>
    <property type="match status" value="1"/>
</dbReference>
<dbReference type="Pfam" id="PF01134">
    <property type="entry name" value="GIDA"/>
    <property type="match status" value="1"/>
</dbReference>
<dbReference type="Pfam" id="PF21680">
    <property type="entry name" value="GIDA_C_1st"/>
    <property type="match status" value="1"/>
</dbReference>
<dbReference type="Pfam" id="PF13932">
    <property type="entry name" value="SAM_GIDA_C"/>
    <property type="match status" value="1"/>
</dbReference>
<dbReference type="PRINTS" id="PR00411">
    <property type="entry name" value="PNDRDTASEI"/>
</dbReference>
<dbReference type="SMART" id="SM01228">
    <property type="entry name" value="GIDA_assoc_3"/>
    <property type="match status" value="1"/>
</dbReference>
<dbReference type="SUPFAM" id="SSF51905">
    <property type="entry name" value="FAD/NAD(P)-binding domain"/>
    <property type="match status" value="1"/>
</dbReference>
<dbReference type="PROSITE" id="PS01280">
    <property type="entry name" value="GIDA_1"/>
    <property type="match status" value="1"/>
</dbReference>
<dbReference type="PROSITE" id="PS01281">
    <property type="entry name" value="GIDA_2"/>
    <property type="match status" value="1"/>
</dbReference>
<gene>
    <name evidence="1" type="primary">mnmG</name>
    <name evidence="1" type="synonym">gidA</name>
    <name type="ordered locus">ABC4116</name>
</gene>
<protein>
    <recommendedName>
        <fullName evidence="1">tRNA uridine 5-carboxymethylaminomethyl modification enzyme MnmG</fullName>
    </recommendedName>
    <alternativeName>
        <fullName evidence="1">Glucose-inhibited division protein A</fullName>
    </alternativeName>
</protein>
<sequence length="629" mass="70200">MSYQGGTFDVIVIGAGHAGVEAGLAAARMGANTLMLTLNLDAVAFMPCNPSVGGPAKGIVVREIDALGGEMGRNIDKTHIQMRMLNTGKGPAVRALRAQADKFRYQQEMKRTIEEQENLLLRQGMVDRLIIEDGECRGVITNTGAQYRAKAVVVTTGTYLRGKIILGELSYESGPNNMQPSIKLSDHLKELGFDLVRFKTGTPPRVHGNTIDYKKTEIQPGDDKPRAFSYETTKFITDQLPCWLTYTSENTHQIISANLGRSPMYSGMIEGTGPRYCPSIEDKIVRFSDKPRHQIFLEPEGRDTSEVYVQGLSTSLPEDVQLSMLKTIPGLEEVRMMRPGYAIEYDAIVPTQLWPTLETKKISGLFTAGQINGTSGYEEAAGQGIMAGINAAQKAFGKEGVILDRSEAYIGVLIDDLVTKGTNEPYRLLTSRAEFRLILRHDNADLRLTEKGYELGLISEERYSRFKAKQEAIEQEKQRISALVVKPSDEVNQLLERLGSRSMTEALKATAVLKRPEMTYDHFLKIIPRPDVELDDEVYEQVEIQVKYEGYIEKQWQQIERLKKMEQKRIPEDLDYDAIQGIATEARQKLKQVRPLSVGQASRVSGVNPADISILLVYLEQGRLAKTSS</sequence>